<keyword id="KW-0223">Dioxygenase</keyword>
<keyword id="KW-0408">Iron</keyword>
<keyword id="KW-0479">Metal-binding</keyword>
<keyword id="KW-0560">Oxidoreductase</keyword>
<keyword id="KW-1185">Reference proteome</keyword>
<accession>Q8X954</accession>
<gene>
    <name evidence="1" type="primary">glaH</name>
    <name type="ordered locus">Z3956</name>
    <name type="ordered locus">ECs3520</name>
</gene>
<organism>
    <name type="scientific">Escherichia coli O157:H7</name>
    <dbReference type="NCBI Taxonomy" id="83334"/>
    <lineage>
        <taxon>Bacteria</taxon>
        <taxon>Pseudomonadati</taxon>
        <taxon>Pseudomonadota</taxon>
        <taxon>Gammaproteobacteria</taxon>
        <taxon>Enterobacterales</taxon>
        <taxon>Enterobacteriaceae</taxon>
        <taxon>Escherichia</taxon>
    </lineage>
</organism>
<name>GLAH_ECO57</name>
<proteinExistence type="inferred from homology"/>
<comment type="function">
    <text evidence="1">Acts as an alpha-ketoglutarate-dependent dioxygenase catalyzing hydroxylation of glutarate (GA) to L-2-hydroxyglutarate (L2HG). Functions in a L-lysine degradation pathway that proceeds via cadaverine, glutarate and L-2-hydroxyglutarate.</text>
</comment>
<comment type="catalytic activity">
    <reaction evidence="1">
        <text>glutarate + 2-oxoglutarate + O2 = (S)-2-hydroxyglutarate + succinate + CO2</text>
        <dbReference type="Rhea" id="RHEA:13821"/>
        <dbReference type="ChEBI" id="CHEBI:15379"/>
        <dbReference type="ChEBI" id="CHEBI:16526"/>
        <dbReference type="ChEBI" id="CHEBI:16782"/>
        <dbReference type="ChEBI" id="CHEBI:16810"/>
        <dbReference type="ChEBI" id="CHEBI:30031"/>
        <dbReference type="ChEBI" id="CHEBI:30921"/>
        <dbReference type="EC" id="1.14.11.64"/>
    </reaction>
    <physiologicalReaction direction="left-to-right" evidence="1">
        <dbReference type="Rhea" id="RHEA:13822"/>
    </physiologicalReaction>
</comment>
<comment type="cofactor">
    <cofactor evidence="1">
        <name>Fe(2+)</name>
        <dbReference type="ChEBI" id="CHEBI:29033"/>
    </cofactor>
    <text evidence="1">Binds 1 Fe(2+) ion per subunit.</text>
</comment>
<comment type="pathway">
    <text evidence="1">Amino-acid degradation.</text>
</comment>
<comment type="subunit">
    <text evidence="1">Homotetramer.</text>
</comment>
<comment type="similarity">
    <text evidence="1">Belongs to the glutarate hydroxylase family.</text>
</comment>
<comment type="sequence caution" evidence="2">
    <conflict type="erroneous initiation">
        <sequence resource="EMBL-CDS" id="AAG57766"/>
    </conflict>
    <text>Extended N-terminus.</text>
</comment>
<evidence type="ECO:0000255" key="1">
    <source>
        <dbReference type="HAMAP-Rule" id="MF_01083"/>
    </source>
</evidence>
<evidence type="ECO:0000305" key="2"/>
<protein>
    <recommendedName>
        <fullName evidence="1">Glutarate 2-hydroxylase</fullName>
        <shortName evidence="1">G-2-H</shortName>
        <ecNumber evidence="1">1.14.11.64</ecNumber>
    </recommendedName>
</protein>
<feature type="chain" id="PRO_0000218179" description="Glutarate 2-hydroxylase">
    <location>
        <begin position="1"/>
        <end position="325"/>
    </location>
</feature>
<feature type="binding site" evidence="1">
    <location>
        <position position="160"/>
    </location>
    <ligand>
        <name>Fe cation</name>
        <dbReference type="ChEBI" id="CHEBI:24875"/>
    </ligand>
</feature>
<feature type="binding site" evidence="1">
    <location>
        <position position="162"/>
    </location>
    <ligand>
        <name>Fe cation</name>
        <dbReference type="ChEBI" id="CHEBI:24875"/>
    </ligand>
</feature>
<feature type="binding site" evidence="1">
    <location>
        <position position="292"/>
    </location>
    <ligand>
        <name>Fe cation</name>
        <dbReference type="ChEBI" id="CHEBI:24875"/>
    </ligand>
</feature>
<sequence length="325" mass="37507">MNALTAVQNNAVDSDQDYSGFTLIPSAQSPRLLELTFTEQTTKQFLEQVAEWPVQALEYKSFLRFRVGKILDDLCANQLQPLLLKTLLNRAEGALLINAVGVDDVKQADEMVKLATAVAHLIGRSNFDAMSGQYYARFVVKNVDNSDSYLRQPHRVMELHNDGTYVEEITDYVLMMKIDEQNMQGGNSLLLHLDDWEHLDHYFRHPMARRPMRFAAPPSKNVSKDVFHPVFDVDQQGRPVMRYIDQFVQPKDFEEGVWLSELSDAIEISKGILSVPVPVGKFLLINNLFWLHGRDRFTPHPDLRRELMRQRGYFAYATHHYQTHQ</sequence>
<reference key="1">
    <citation type="journal article" date="2001" name="Nature">
        <title>Genome sequence of enterohaemorrhagic Escherichia coli O157:H7.</title>
        <authorList>
            <person name="Perna N.T."/>
            <person name="Plunkett G. III"/>
            <person name="Burland V."/>
            <person name="Mau B."/>
            <person name="Glasner J.D."/>
            <person name="Rose D.J."/>
            <person name="Mayhew G.F."/>
            <person name="Evans P.S."/>
            <person name="Gregor J."/>
            <person name="Kirkpatrick H.A."/>
            <person name="Posfai G."/>
            <person name="Hackett J."/>
            <person name="Klink S."/>
            <person name="Boutin A."/>
            <person name="Shao Y."/>
            <person name="Miller L."/>
            <person name="Grotbeck E.J."/>
            <person name="Davis N.W."/>
            <person name="Lim A."/>
            <person name="Dimalanta E.T."/>
            <person name="Potamousis K."/>
            <person name="Apodaca J."/>
            <person name="Anantharaman T.S."/>
            <person name="Lin J."/>
            <person name="Yen G."/>
            <person name="Schwartz D.C."/>
            <person name="Welch R.A."/>
            <person name="Blattner F.R."/>
        </authorList>
    </citation>
    <scope>NUCLEOTIDE SEQUENCE [LARGE SCALE GENOMIC DNA]</scope>
    <source>
        <strain>O157:H7 / EDL933 / ATCC 700927 / EHEC</strain>
    </source>
</reference>
<reference key="2">
    <citation type="journal article" date="2001" name="DNA Res.">
        <title>Complete genome sequence of enterohemorrhagic Escherichia coli O157:H7 and genomic comparison with a laboratory strain K-12.</title>
        <authorList>
            <person name="Hayashi T."/>
            <person name="Makino K."/>
            <person name="Ohnishi M."/>
            <person name="Kurokawa K."/>
            <person name="Ishii K."/>
            <person name="Yokoyama K."/>
            <person name="Han C.-G."/>
            <person name="Ohtsubo E."/>
            <person name="Nakayama K."/>
            <person name="Murata T."/>
            <person name="Tanaka M."/>
            <person name="Tobe T."/>
            <person name="Iida T."/>
            <person name="Takami H."/>
            <person name="Honda T."/>
            <person name="Sasakawa C."/>
            <person name="Ogasawara N."/>
            <person name="Yasunaga T."/>
            <person name="Kuhara S."/>
            <person name="Shiba T."/>
            <person name="Hattori M."/>
            <person name="Shinagawa H."/>
        </authorList>
    </citation>
    <scope>NUCLEOTIDE SEQUENCE [LARGE SCALE GENOMIC DNA]</scope>
    <source>
        <strain>O157:H7 / Sakai / RIMD 0509952 / EHEC</strain>
    </source>
</reference>
<dbReference type="EC" id="1.14.11.64" evidence="1"/>
<dbReference type="EMBL" id="AE005174">
    <property type="protein sequence ID" value="AAG57766.1"/>
    <property type="status" value="ALT_INIT"/>
    <property type="molecule type" value="Genomic_DNA"/>
</dbReference>
<dbReference type="EMBL" id="BA000007">
    <property type="protein sequence ID" value="BAB36943.2"/>
    <property type="molecule type" value="Genomic_DNA"/>
</dbReference>
<dbReference type="PIR" id="B85913">
    <property type="entry name" value="B85913"/>
</dbReference>
<dbReference type="PIR" id="H91068">
    <property type="entry name" value="H91068"/>
</dbReference>
<dbReference type="RefSeq" id="WP_001301435.1">
    <property type="nucleotide sequence ID" value="NZ_VOAI01000003.1"/>
</dbReference>
<dbReference type="SMR" id="Q8X954"/>
<dbReference type="STRING" id="155864.Z3956"/>
<dbReference type="KEGG" id="ece:Z3956"/>
<dbReference type="KEGG" id="ecs:ECs_3520"/>
<dbReference type="PATRIC" id="fig|386585.9.peg.3674"/>
<dbReference type="eggNOG" id="ENOG502Z8GB">
    <property type="taxonomic scope" value="Bacteria"/>
</dbReference>
<dbReference type="HOGENOM" id="CLU_075277_0_0_6"/>
<dbReference type="OMA" id="RREMRWT"/>
<dbReference type="Proteomes" id="UP000000558">
    <property type="component" value="Chromosome"/>
</dbReference>
<dbReference type="Proteomes" id="UP000002519">
    <property type="component" value="Chromosome"/>
</dbReference>
<dbReference type="GO" id="GO:0008198">
    <property type="term" value="F:ferrous iron binding"/>
    <property type="evidence" value="ECO:0007669"/>
    <property type="project" value="UniProtKB-UniRule"/>
</dbReference>
<dbReference type="GO" id="GO:0106343">
    <property type="term" value="F:glutarate dioxygenase activity"/>
    <property type="evidence" value="ECO:0007669"/>
    <property type="project" value="UniProtKB-EC"/>
</dbReference>
<dbReference type="GO" id="GO:0050498">
    <property type="term" value="F:oxidoreductase activity, acting on paired donors, with incorporation or reduction of molecular oxygen, with 2-oxoglutarate as one donor, and the other dehydrogenated"/>
    <property type="evidence" value="ECO:0007669"/>
    <property type="project" value="UniProtKB-UniRule"/>
</dbReference>
<dbReference type="GO" id="GO:0019477">
    <property type="term" value="P:L-lysine catabolic process"/>
    <property type="evidence" value="ECO:0007669"/>
    <property type="project" value="UniProtKB-UniRule"/>
</dbReference>
<dbReference type="CDD" id="cd00250">
    <property type="entry name" value="CAS_like"/>
    <property type="match status" value="1"/>
</dbReference>
<dbReference type="FunFam" id="3.60.130.10:FF:000004">
    <property type="entry name" value="Glutarate 2-hydroxylase"/>
    <property type="match status" value="1"/>
</dbReference>
<dbReference type="Gene3D" id="3.60.130.10">
    <property type="entry name" value="Clavaminate synthase-like"/>
    <property type="match status" value="1"/>
</dbReference>
<dbReference type="HAMAP" id="MF_01083">
    <property type="entry name" value="glutarate_hydroxylase"/>
    <property type="match status" value="1"/>
</dbReference>
<dbReference type="InterPro" id="IPR015038">
    <property type="entry name" value="GlaH"/>
</dbReference>
<dbReference type="InterPro" id="IPR042098">
    <property type="entry name" value="TauD-like_sf"/>
</dbReference>
<dbReference type="NCBIfam" id="NF002814">
    <property type="entry name" value="PRK02963.1"/>
    <property type="match status" value="1"/>
</dbReference>
<dbReference type="Pfam" id="PF08943">
    <property type="entry name" value="CsiD"/>
    <property type="match status" value="1"/>
</dbReference>
<dbReference type="SUPFAM" id="SSF51197">
    <property type="entry name" value="Clavaminate synthase-like"/>
    <property type="match status" value="1"/>
</dbReference>